<reference key="1">
    <citation type="journal article" date="2004" name="Proc. Natl. Acad. Sci. U.S.A.">
        <title>Insights into the evolution of Yersinia pestis through whole-genome comparison with Yersinia pseudotuberculosis.</title>
        <authorList>
            <person name="Chain P.S.G."/>
            <person name="Carniel E."/>
            <person name="Larimer F.W."/>
            <person name="Lamerdin J."/>
            <person name="Stoutland P.O."/>
            <person name="Regala W.M."/>
            <person name="Georgescu A.M."/>
            <person name="Vergez L.M."/>
            <person name="Land M.L."/>
            <person name="Motin V.L."/>
            <person name="Brubaker R.R."/>
            <person name="Fowler J."/>
            <person name="Hinnebusch J."/>
            <person name="Marceau M."/>
            <person name="Medigue C."/>
            <person name="Simonet M."/>
            <person name="Chenal-Francisque V."/>
            <person name="Souza B."/>
            <person name="Dacheux D."/>
            <person name="Elliott J.M."/>
            <person name="Derbise A."/>
            <person name="Hauser L.J."/>
            <person name="Garcia E."/>
        </authorList>
    </citation>
    <scope>NUCLEOTIDE SEQUENCE [LARGE SCALE GENOMIC DNA]</scope>
    <source>
        <strain>IP32953</strain>
    </source>
</reference>
<feature type="chain" id="PRO_1000047640" description="Glutamate racemase">
    <location>
        <begin position="1"/>
        <end position="287"/>
    </location>
</feature>
<feature type="region of interest" description="Disordered" evidence="2">
    <location>
        <begin position="1"/>
        <end position="25"/>
    </location>
</feature>
<feature type="compositionally biased region" description="Polar residues" evidence="2">
    <location>
        <begin position="1"/>
        <end position="15"/>
    </location>
</feature>
<feature type="active site" description="Proton donor/acceptor" evidence="1">
    <location>
        <position position="96"/>
    </location>
</feature>
<feature type="active site" description="Proton donor/acceptor" evidence="1">
    <location>
        <position position="208"/>
    </location>
</feature>
<feature type="binding site" evidence="1">
    <location>
        <begin position="32"/>
        <end position="33"/>
    </location>
    <ligand>
        <name>substrate</name>
    </ligand>
</feature>
<feature type="binding site" evidence="1">
    <location>
        <begin position="64"/>
        <end position="65"/>
    </location>
    <ligand>
        <name>substrate</name>
    </ligand>
</feature>
<feature type="binding site" evidence="1">
    <location>
        <begin position="97"/>
        <end position="98"/>
    </location>
    <ligand>
        <name>substrate</name>
    </ligand>
</feature>
<feature type="binding site" evidence="1">
    <location>
        <begin position="209"/>
        <end position="210"/>
    </location>
    <ligand>
        <name>substrate</name>
    </ligand>
</feature>
<dbReference type="EC" id="5.1.1.3" evidence="1"/>
<dbReference type="EMBL" id="BX936398">
    <property type="protein sequence ID" value="CAH19366.1"/>
    <property type="molecule type" value="Genomic_DNA"/>
</dbReference>
<dbReference type="RefSeq" id="WP_011191478.1">
    <property type="nucleotide sequence ID" value="NC_006155.1"/>
</dbReference>
<dbReference type="SMR" id="Q66G56"/>
<dbReference type="GeneID" id="49787903"/>
<dbReference type="KEGG" id="ypo:BZ17_2470"/>
<dbReference type="KEGG" id="yps:YPTB0126"/>
<dbReference type="PATRIC" id="fig|273123.14.peg.2589"/>
<dbReference type="UniPathway" id="UPA00219"/>
<dbReference type="Proteomes" id="UP000001011">
    <property type="component" value="Chromosome"/>
</dbReference>
<dbReference type="GO" id="GO:0008881">
    <property type="term" value="F:glutamate racemase activity"/>
    <property type="evidence" value="ECO:0007669"/>
    <property type="project" value="UniProtKB-UniRule"/>
</dbReference>
<dbReference type="GO" id="GO:0071555">
    <property type="term" value="P:cell wall organization"/>
    <property type="evidence" value="ECO:0007669"/>
    <property type="project" value="UniProtKB-KW"/>
</dbReference>
<dbReference type="GO" id="GO:0009252">
    <property type="term" value="P:peptidoglycan biosynthetic process"/>
    <property type="evidence" value="ECO:0007669"/>
    <property type="project" value="UniProtKB-UniRule"/>
</dbReference>
<dbReference type="GO" id="GO:0008360">
    <property type="term" value="P:regulation of cell shape"/>
    <property type="evidence" value="ECO:0007669"/>
    <property type="project" value="UniProtKB-KW"/>
</dbReference>
<dbReference type="FunFam" id="3.40.50.1860:FF:000002">
    <property type="entry name" value="Glutamate racemase"/>
    <property type="match status" value="1"/>
</dbReference>
<dbReference type="Gene3D" id="3.40.50.1860">
    <property type="match status" value="2"/>
</dbReference>
<dbReference type="HAMAP" id="MF_00258">
    <property type="entry name" value="Glu_racemase"/>
    <property type="match status" value="1"/>
</dbReference>
<dbReference type="InterPro" id="IPR015942">
    <property type="entry name" value="Asp/Glu/hydantoin_racemase"/>
</dbReference>
<dbReference type="InterPro" id="IPR001920">
    <property type="entry name" value="Asp/Glu_race"/>
</dbReference>
<dbReference type="InterPro" id="IPR018187">
    <property type="entry name" value="Asp/Glu_racemase_AS_1"/>
</dbReference>
<dbReference type="InterPro" id="IPR033134">
    <property type="entry name" value="Asp/Glu_racemase_AS_2"/>
</dbReference>
<dbReference type="InterPro" id="IPR004391">
    <property type="entry name" value="Glu_race"/>
</dbReference>
<dbReference type="NCBIfam" id="TIGR00067">
    <property type="entry name" value="glut_race"/>
    <property type="match status" value="1"/>
</dbReference>
<dbReference type="NCBIfam" id="NF002034">
    <property type="entry name" value="PRK00865.1-1"/>
    <property type="match status" value="1"/>
</dbReference>
<dbReference type="PANTHER" id="PTHR21198">
    <property type="entry name" value="GLUTAMATE RACEMASE"/>
    <property type="match status" value="1"/>
</dbReference>
<dbReference type="PANTHER" id="PTHR21198:SF2">
    <property type="entry name" value="GLUTAMATE RACEMASE"/>
    <property type="match status" value="1"/>
</dbReference>
<dbReference type="Pfam" id="PF01177">
    <property type="entry name" value="Asp_Glu_race"/>
    <property type="match status" value="1"/>
</dbReference>
<dbReference type="SUPFAM" id="SSF53681">
    <property type="entry name" value="Aspartate/glutamate racemase"/>
    <property type="match status" value="2"/>
</dbReference>
<dbReference type="PROSITE" id="PS00923">
    <property type="entry name" value="ASP_GLU_RACEMASE_1"/>
    <property type="match status" value="1"/>
</dbReference>
<dbReference type="PROSITE" id="PS00924">
    <property type="entry name" value="ASP_GLU_RACEMASE_2"/>
    <property type="match status" value="1"/>
</dbReference>
<gene>
    <name evidence="1" type="primary">murI</name>
    <name type="ordered locus">YPTB0126</name>
</gene>
<keyword id="KW-0133">Cell shape</keyword>
<keyword id="KW-0961">Cell wall biogenesis/degradation</keyword>
<keyword id="KW-0413">Isomerase</keyword>
<keyword id="KW-0573">Peptidoglycan synthesis</keyword>
<accession>Q66G56</accession>
<name>MURI_YERPS</name>
<sequence length="287" mass="31196">MATKPQDANTTSREAITSKADSPPRPTALIFDSGVGGLSVYQEIRQLLPNLHYIYAFDNVAFPYGEKSGEFIVERVLEIVTAVQQSHPLAIVVIACNTASTVSLPALRERFAFPVVGVVPAIKPAVRLTRNGVVGLLATRATVHASYTLDLIARFATDCKIELLGSSELVEVAETKLHGGVVPLEVLKKILHPWLSMREPPDTIVLGCTHFPLLTEELAQVLPEGTRMVDSGAAIARRTAWLISSQENVISSQDENIAYCMALDEDTDALLPVLQSYGFPKLQKLPI</sequence>
<protein>
    <recommendedName>
        <fullName evidence="1">Glutamate racemase</fullName>
        <ecNumber evidence="1">5.1.1.3</ecNumber>
    </recommendedName>
</protein>
<evidence type="ECO:0000255" key="1">
    <source>
        <dbReference type="HAMAP-Rule" id="MF_00258"/>
    </source>
</evidence>
<evidence type="ECO:0000256" key="2">
    <source>
        <dbReference type="SAM" id="MobiDB-lite"/>
    </source>
</evidence>
<organism>
    <name type="scientific">Yersinia pseudotuberculosis serotype I (strain IP32953)</name>
    <dbReference type="NCBI Taxonomy" id="273123"/>
    <lineage>
        <taxon>Bacteria</taxon>
        <taxon>Pseudomonadati</taxon>
        <taxon>Pseudomonadota</taxon>
        <taxon>Gammaproteobacteria</taxon>
        <taxon>Enterobacterales</taxon>
        <taxon>Yersiniaceae</taxon>
        <taxon>Yersinia</taxon>
    </lineage>
</organism>
<comment type="function">
    <text evidence="1">Provides the (R)-glutamate required for cell wall biosynthesis.</text>
</comment>
<comment type="catalytic activity">
    <reaction evidence="1">
        <text>L-glutamate = D-glutamate</text>
        <dbReference type="Rhea" id="RHEA:12813"/>
        <dbReference type="ChEBI" id="CHEBI:29985"/>
        <dbReference type="ChEBI" id="CHEBI:29986"/>
        <dbReference type="EC" id="5.1.1.3"/>
    </reaction>
</comment>
<comment type="pathway">
    <text evidence="1">Cell wall biogenesis; peptidoglycan biosynthesis.</text>
</comment>
<comment type="similarity">
    <text evidence="1">Belongs to the aspartate/glutamate racemases family.</text>
</comment>
<proteinExistence type="inferred from homology"/>